<feature type="chain" id="PRO_0000172904" description="Dephospho-CoA kinase">
    <location>
        <begin position="1"/>
        <end position="201"/>
    </location>
</feature>
<feature type="domain" description="DPCK" evidence="1">
    <location>
        <begin position="2"/>
        <end position="201"/>
    </location>
</feature>
<feature type="binding site" evidence="1">
    <location>
        <begin position="10"/>
        <end position="15"/>
    </location>
    <ligand>
        <name>ATP</name>
        <dbReference type="ChEBI" id="CHEBI:30616"/>
    </ligand>
</feature>
<sequence length="201" mass="22731">MMIGLTGGIASGKSSVAKMMEELGLPIVDADQVARDVVEPGMPAYEAIVAHFGTGVVNDDGTLNRKALGSIVFQQEEERRVLNEIVHPAVRRQMQQQKEQLIRSGEKTIVFDIPLLYESNLFYLVEKVLLVYVDEHTQLQRLMNRDQAGKDDAIHRIRSQRPLESKRDRADAIIDNSGTLDATKRQLIDILKRWKVIPEDQ</sequence>
<protein>
    <recommendedName>
        <fullName evidence="1">Dephospho-CoA kinase</fullName>
        <ecNumber evidence="1">2.7.1.24</ecNumber>
    </recommendedName>
    <alternativeName>
        <fullName evidence="1">Dephosphocoenzyme A kinase</fullName>
    </alternativeName>
</protein>
<accession>Q9K857</accession>
<name>COAE_HALH5</name>
<keyword id="KW-0067">ATP-binding</keyword>
<keyword id="KW-0173">Coenzyme A biosynthesis</keyword>
<keyword id="KW-0963">Cytoplasm</keyword>
<keyword id="KW-0418">Kinase</keyword>
<keyword id="KW-0547">Nucleotide-binding</keyword>
<keyword id="KW-1185">Reference proteome</keyword>
<keyword id="KW-0808">Transferase</keyword>
<reference key="1">
    <citation type="journal article" date="2000" name="Nucleic Acids Res.">
        <title>Complete genome sequence of the alkaliphilic bacterium Bacillus halodurans and genomic sequence comparison with Bacillus subtilis.</title>
        <authorList>
            <person name="Takami H."/>
            <person name="Nakasone K."/>
            <person name="Takaki Y."/>
            <person name="Maeno G."/>
            <person name="Sasaki R."/>
            <person name="Masui N."/>
            <person name="Fuji F."/>
            <person name="Hirama C."/>
            <person name="Nakamura Y."/>
            <person name="Ogasawara N."/>
            <person name="Kuhara S."/>
            <person name="Horikoshi K."/>
        </authorList>
    </citation>
    <scope>NUCLEOTIDE SEQUENCE [LARGE SCALE GENOMIC DNA]</scope>
    <source>
        <strain>ATCC BAA-125 / DSM 18197 / FERM 7344 / JCM 9153 / C-125</strain>
    </source>
</reference>
<proteinExistence type="inferred from homology"/>
<dbReference type="EC" id="2.7.1.24" evidence="1"/>
<dbReference type="EMBL" id="BA000004">
    <property type="protein sequence ID" value="BAB06869.1"/>
    <property type="molecule type" value="Genomic_DNA"/>
</dbReference>
<dbReference type="PIR" id="F84043">
    <property type="entry name" value="F84043"/>
</dbReference>
<dbReference type="RefSeq" id="WP_010899293.1">
    <property type="nucleotide sequence ID" value="NC_002570.2"/>
</dbReference>
<dbReference type="SMR" id="Q9K857"/>
<dbReference type="STRING" id="272558.gene:10729062"/>
<dbReference type="KEGG" id="bha:BH3150"/>
<dbReference type="eggNOG" id="COG0237">
    <property type="taxonomic scope" value="Bacteria"/>
</dbReference>
<dbReference type="HOGENOM" id="CLU_057180_0_0_9"/>
<dbReference type="UniPathway" id="UPA00241">
    <property type="reaction ID" value="UER00356"/>
</dbReference>
<dbReference type="Proteomes" id="UP000001258">
    <property type="component" value="Chromosome"/>
</dbReference>
<dbReference type="GO" id="GO:0005737">
    <property type="term" value="C:cytoplasm"/>
    <property type="evidence" value="ECO:0007669"/>
    <property type="project" value="UniProtKB-SubCell"/>
</dbReference>
<dbReference type="GO" id="GO:0005524">
    <property type="term" value="F:ATP binding"/>
    <property type="evidence" value="ECO:0007669"/>
    <property type="project" value="UniProtKB-UniRule"/>
</dbReference>
<dbReference type="GO" id="GO:0004140">
    <property type="term" value="F:dephospho-CoA kinase activity"/>
    <property type="evidence" value="ECO:0007669"/>
    <property type="project" value="UniProtKB-UniRule"/>
</dbReference>
<dbReference type="GO" id="GO:0015937">
    <property type="term" value="P:coenzyme A biosynthetic process"/>
    <property type="evidence" value="ECO:0007669"/>
    <property type="project" value="UniProtKB-UniRule"/>
</dbReference>
<dbReference type="CDD" id="cd02022">
    <property type="entry name" value="DPCK"/>
    <property type="match status" value="1"/>
</dbReference>
<dbReference type="FunFam" id="3.40.50.300:FF:000485">
    <property type="entry name" value="Dephospho-CoA kinase CAB5"/>
    <property type="match status" value="1"/>
</dbReference>
<dbReference type="Gene3D" id="3.40.50.300">
    <property type="entry name" value="P-loop containing nucleotide triphosphate hydrolases"/>
    <property type="match status" value="1"/>
</dbReference>
<dbReference type="HAMAP" id="MF_00376">
    <property type="entry name" value="Dephospho_CoA_kinase"/>
    <property type="match status" value="1"/>
</dbReference>
<dbReference type="InterPro" id="IPR001977">
    <property type="entry name" value="Depp_CoAkinase"/>
</dbReference>
<dbReference type="InterPro" id="IPR027417">
    <property type="entry name" value="P-loop_NTPase"/>
</dbReference>
<dbReference type="NCBIfam" id="TIGR00152">
    <property type="entry name" value="dephospho-CoA kinase"/>
    <property type="match status" value="1"/>
</dbReference>
<dbReference type="PANTHER" id="PTHR10695:SF46">
    <property type="entry name" value="BIFUNCTIONAL COENZYME A SYNTHASE-RELATED"/>
    <property type="match status" value="1"/>
</dbReference>
<dbReference type="PANTHER" id="PTHR10695">
    <property type="entry name" value="DEPHOSPHO-COA KINASE-RELATED"/>
    <property type="match status" value="1"/>
</dbReference>
<dbReference type="Pfam" id="PF01121">
    <property type="entry name" value="CoaE"/>
    <property type="match status" value="1"/>
</dbReference>
<dbReference type="SUPFAM" id="SSF52540">
    <property type="entry name" value="P-loop containing nucleoside triphosphate hydrolases"/>
    <property type="match status" value="1"/>
</dbReference>
<dbReference type="PROSITE" id="PS51219">
    <property type="entry name" value="DPCK"/>
    <property type="match status" value="1"/>
</dbReference>
<evidence type="ECO:0000255" key="1">
    <source>
        <dbReference type="HAMAP-Rule" id="MF_00376"/>
    </source>
</evidence>
<evidence type="ECO:0000305" key="2"/>
<gene>
    <name evidence="1" type="primary">coaE</name>
    <name type="ordered locus">BH3150</name>
</gene>
<comment type="function">
    <text evidence="1">Catalyzes the phosphorylation of the 3'-hydroxyl group of dephosphocoenzyme A to form coenzyme A.</text>
</comment>
<comment type="catalytic activity">
    <reaction evidence="1">
        <text>3'-dephospho-CoA + ATP = ADP + CoA + H(+)</text>
        <dbReference type="Rhea" id="RHEA:18245"/>
        <dbReference type="ChEBI" id="CHEBI:15378"/>
        <dbReference type="ChEBI" id="CHEBI:30616"/>
        <dbReference type="ChEBI" id="CHEBI:57287"/>
        <dbReference type="ChEBI" id="CHEBI:57328"/>
        <dbReference type="ChEBI" id="CHEBI:456216"/>
        <dbReference type="EC" id="2.7.1.24"/>
    </reaction>
</comment>
<comment type="pathway">
    <text evidence="1">Cofactor biosynthesis; coenzyme A biosynthesis; CoA from (R)-pantothenate: step 5/5.</text>
</comment>
<comment type="subcellular location">
    <subcellularLocation>
        <location evidence="1">Cytoplasm</location>
    </subcellularLocation>
</comment>
<comment type="similarity">
    <text evidence="1 2">Belongs to the CoaE family.</text>
</comment>
<organism>
    <name type="scientific">Halalkalibacterium halodurans (strain ATCC BAA-125 / DSM 18197 / FERM 7344 / JCM 9153 / C-125)</name>
    <name type="common">Bacillus halodurans</name>
    <dbReference type="NCBI Taxonomy" id="272558"/>
    <lineage>
        <taxon>Bacteria</taxon>
        <taxon>Bacillati</taxon>
        <taxon>Bacillota</taxon>
        <taxon>Bacilli</taxon>
        <taxon>Bacillales</taxon>
        <taxon>Bacillaceae</taxon>
        <taxon>Halalkalibacterium (ex Joshi et al. 2022)</taxon>
    </lineage>
</organism>